<protein>
    <recommendedName>
        <fullName evidence="1">Glycogen synthase</fullName>
        <ecNumber evidence="1">2.4.1.21</ecNumber>
    </recommendedName>
    <alternativeName>
        <fullName evidence="1">Starch [bacterial glycogen] synthase</fullName>
    </alternativeName>
</protein>
<gene>
    <name evidence="1" type="primary">glgA</name>
    <name type="ordered locus">RPE_0800</name>
</gene>
<feature type="chain" id="PRO_1000014380" description="Glycogen synthase">
    <location>
        <begin position="1"/>
        <end position="489"/>
    </location>
</feature>
<feature type="binding site" evidence="1">
    <location>
        <position position="18"/>
    </location>
    <ligand>
        <name>ADP-alpha-D-glucose</name>
        <dbReference type="ChEBI" id="CHEBI:57498"/>
    </ligand>
</feature>
<evidence type="ECO:0000255" key="1">
    <source>
        <dbReference type="HAMAP-Rule" id="MF_00484"/>
    </source>
</evidence>
<sequence length="489" mass="52028">MKPIKALSVASEIFPLIKTGGLADVTGALPGALKPHGITLRTLVPGYPTVIAGIEAALPVHVFPALFGGPARLLAARKGDVELFVLDAPHLYKRPGNPYASPDGRDWPDNAQRFAALARAAAEIGQGLVPAFVPDIVHAHDWQAGLTAAYLRYSDKPAPATVFTVHNLAFQGQFPRELLGTLGLPPSSFGVDGVEYYGAIGYMKAGLQLSDRITTVSPAYALEIQAPEAGMGLDGLLRQRSHHLTGILNGIDEKVWNPATDKRIAATYDVKTLPARGANKAALRERFGLASETDRLLIGVISRLSWQKGLDLLLETLPLLLSEGIQLALLGAGDAALEAAFRQVAQSHPGQIGVVVGYDEDLAHLIQAGADALLVPSRFEPCGLTQLCALRYGAVPVVARVGGLSDTVVDANEMAIAAGVATGVQFSPVTRDMLAAALIKTHGLYSDRTTWQALQQNGMRSDVSWRNPAQHYAQLYRNLLAARSPHLAM</sequence>
<proteinExistence type="inferred from homology"/>
<dbReference type="EC" id="2.4.1.21" evidence="1"/>
<dbReference type="EMBL" id="CP000463">
    <property type="protein sequence ID" value="ABJ04756.1"/>
    <property type="molecule type" value="Genomic_DNA"/>
</dbReference>
<dbReference type="SMR" id="Q07TH8"/>
<dbReference type="STRING" id="316055.RPE_0800"/>
<dbReference type="CAZy" id="GT5">
    <property type="family name" value="Glycosyltransferase Family 5"/>
</dbReference>
<dbReference type="KEGG" id="rpe:RPE_0800"/>
<dbReference type="eggNOG" id="COG0297">
    <property type="taxonomic scope" value="Bacteria"/>
</dbReference>
<dbReference type="HOGENOM" id="CLU_009583_18_4_5"/>
<dbReference type="OrthoDB" id="9808590at2"/>
<dbReference type="UniPathway" id="UPA00164"/>
<dbReference type="GO" id="GO:0005829">
    <property type="term" value="C:cytosol"/>
    <property type="evidence" value="ECO:0007669"/>
    <property type="project" value="TreeGrafter"/>
</dbReference>
<dbReference type="GO" id="GO:0009011">
    <property type="term" value="F:alpha-1,4-glucan glucosyltransferase (ADP-glucose donor) activity"/>
    <property type="evidence" value="ECO:0007669"/>
    <property type="project" value="UniProtKB-UniRule"/>
</dbReference>
<dbReference type="GO" id="GO:0004373">
    <property type="term" value="F:alpha-1,4-glucan glucosyltransferase (UDP-glucose donor) activity"/>
    <property type="evidence" value="ECO:0007669"/>
    <property type="project" value="InterPro"/>
</dbReference>
<dbReference type="GO" id="GO:0005978">
    <property type="term" value="P:glycogen biosynthetic process"/>
    <property type="evidence" value="ECO:0007669"/>
    <property type="project" value="UniProtKB-UniRule"/>
</dbReference>
<dbReference type="CDD" id="cd03791">
    <property type="entry name" value="GT5_Glycogen_synthase_DULL1-like"/>
    <property type="match status" value="1"/>
</dbReference>
<dbReference type="Gene3D" id="3.40.50.2000">
    <property type="entry name" value="Glycogen Phosphorylase B"/>
    <property type="match status" value="2"/>
</dbReference>
<dbReference type="HAMAP" id="MF_00484">
    <property type="entry name" value="Glycogen_synth"/>
    <property type="match status" value="1"/>
</dbReference>
<dbReference type="InterPro" id="IPR001296">
    <property type="entry name" value="Glyco_trans_1"/>
</dbReference>
<dbReference type="InterPro" id="IPR011835">
    <property type="entry name" value="GS/SS"/>
</dbReference>
<dbReference type="InterPro" id="IPR013534">
    <property type="entry name" value="Starch_synth_cat_dom"/>
</dbReference>
<dbReference type="NCBIfam" id="TIGR02095">
    <property type="entry name" value="glgA"/>
    <property type="match status" value="1"/>
</dbReference>
<dbReference type="NCBIfam" id="NF001899">
    <property type="entry name" value="PRK00654.1-2"/>
    <property type="match status" value="1"/>
</dbReference>
<dbReference type="NCBIfam" id="NF010699">
    <property type="entry name" value="PRK14099.1"/>
    <property type="match status" value="1"/>
</dbReference>
<dbReference type="PANTHER" id="PTHR45825:SF11">
    <property type="entry name" value="ALPHA AMYLASE DOMAIN-CONTAINING PROTEIN"/>
    <property type="match status" value="1"/>
</dbReference>
<dbReference type="PANTHER" id="PTHR45825">
    <property type="entry name" value="GRANULE-BOUND STARCH SYNTHASE 1, CHLOROPLASTIC/AMYLOPLASTIC"/>
    <property type="match status" value="1"/>
</dbReference>
<dbReference type="Pfam" id="PF08323">
    <property type="entry name" value="Glyco_transf_5"/>
    <property type="match status" value="1"/>
</dbReference>
<dbReference type="Pfam" id="PF00534">
    <property type="entry name" value="Glycos_transf_1"/>
    <property type="match status" value="1"/>
</dbReference>
<dbReference type="SUPFAM" id="SSF53756">
    <property type="entry name" value="UDP-Glycosyltransferase/glycogen phosphorylase"/>
    <property type="match status" value="1"/>
</dbReference>
<accession>Q07TH8</accession>
<organism>
    <name type="scientific">Rhodopseudomonas palustris (strain BisA53)</name>
    <dbReference type="NCBI Taxonomy" id="316055"/>
    <lineage>
        <taxon>Bacteria</taxon>
        <taxon>Pseudomonadati</taxon>
        <taxon>Pseudomonadota</taxon>
        <taxon>Alphaproteobacteria</taxon>
        <taxon>Hyphomicrobiales</taxon>
        <taxon>Nitrobacteraceae</taxon>
        <taxon>Rhodopseudomonas</taxon>
    </lineage>
</organism>
<reference key="1">
    <citation type="submission" date="2006-09" db="EMBL/GenBank/DDBJ databases">
        <title>Complete sequence of Rhodopseudomonas palustris BisA53.</title>
        <authorList>
            <consortium name="US DOE Joint Genome Institute"/>
            <person name="Copeland A."/>
            <person name="Lucas S."/>
            <person name="Lapidus A."/>
            <person name="Barry K."/>
            <person name="Detter J.C."/>
            <person name="Glavina del Rio T."/>
            <person name="Hammon N."/>
            <person name="Israni S."/>
            <person name="Dalin E."/>
            <person name="Tice H."/>
            <person name="Pitluck S."/>
            <person name="Chain P."/>
            <person name="Malfatti S."/>
            <person name="Shin M."/>
            <person name="Vergez L."/>
            <person name="Schmutz J."/>
            <person name="Larimer F."/>
            <person name="Land M."/>
            <person name="Hauser L."/>
            <person name="Pelletier D.A."/>
            <person name="Kyrpides N."/>
            <person name="Kim E."/>
            <person name="Harwood C.S."/>
            <person name="Oda Y."/>
            <person name="Richardson P."/>
        </authorList>
    </citation>
    <scope>NUCLEOTIDE SEQUENCE [LARGE SCALE GENOMIC DNA]</scope>
    <source>
        <strain>BisA53</strain>
    </source>
</reference>
<comment type="function">
    <text evidence="1">Synthesizes alpha-1,4-glucan chains using ADP-glucose.</text>
</comment>
<comment type="catalytic activity">
    <reaction evidence="1">
        <text>[(1-&gt;4)-alpha-D-glucosyl](n) + ADP-alpha-D-glucose = [(1-&gt;4)-alpha-D-glucosyl](n+1) + ADP + H(+)</text>
        <dbReference type="Rhea" id="RHEA:18189"/>
        <dbReference type="Rhea" id="RHEA-COMP:9584"/>
        <dbReference type="Rhea" id="RHEA-COMP:9587"/>
        <dbReference type="ChEBI" id="CHEBI:15378"/>
        <dbReference type="ChEBI" id="CHEBI:15444"/>
        <dbReference type="ChEBI" id="CHEBI:57498"/>
        <dbReference type="ChEBI" id="CHEBI:456216"/>
        <dbReference type="EC" id="2.4.1.21"/>
    </reaction>
</comment>
<comment type="pathway">
    <text evidence="1">Glycan biosynthesis; glycogen biosynthesis.</text>
</comment>
<comment type="similarity">
    <text evidence="1">Belongs to the glycosyltransferase 1 family. Bacterial/plant glycogen synthase subfamily.</text>
</comment>
<name>GLGA_RHOP5</name>
<keyword id="KW-0320">Glycogen biosynthesis</keyword>
<keyword id="KW-0328">Glycosyltransferase</keyword>
<keyword id="KW-0808">Transferase</keyword>